<feature type="chain" id="PRO_0000072567" description="TOM1-like protein 1">
    <location>
        <begin position="1"/>
        <end position="474"/>
    </location>
</feature>
<feature type="domain" description="VHS" evidence="3">
    <location>
        <begin position="22"/>
        <end position="154"/>
    </location>
</feature>
<feature type="domain" description="GAT" evidence="4">
    <location>
        <begin position="199"/>
        <end position="287"/>
    </location>
</feature>
<feature type="region of interest" description="Disordered" evidence="5">
    <location>
        <begin position="153"/>
        <end position="180"/>
    </location>
</feature>
<feature type="region of interest" description="Disordered" evidence="5">
    <location>
        <begin position="291"/>
        <end position="317"/>
    </location>
</feature>
<feature type="region of interest" description="Interaction with GRB2">
    <location>
        <begin position="392"/>
        <end position="395"/>
    </location>
</feature>
<feature type="region of interest" description="Interaction with PIK3R1">
    <location>
        <begin position="441"/>
        <end position="444"/>
    </location>
</feature>
<feature type="short sequence motif" description="SH3-binding">
    <location>
        <begin position="420"/>
        <end position="424"/>
    </location>
</feature>
<feature type="short sequence motif" description="SH2-binding">
    <location>
        <begin position="457"/>
        <end position="460"/>
    </location>
</feature>
<feature type="compositionally biased region" description="Polar residues" evidence="5">
    <location>
        <begin position="165"/>
        <end position="178"/>
    </location>
</feature>
<feature type="compositionally biased region" description="Basic and acidic residues" evidence="5">
    <location>
        <begin position="293"/>
        <end position="302"/>
    </location>
</feature>
<feature type="modified residue" description="Phosphoserine" evidence="10">
    <location>
        <position position="170"/>
    </location>
</feature>
<feature type="modified residue" description="Phosphoserine" evidence="2">
    <location>
        <position position="313"/>
    </location>
</feature>
<feature type="modified residue" description="Phosphoserine" evidence="2">
    <location>
        <position position="320"/>
    </location>
</feature>
<feature type="modified residue" description="Phosphotyrosine" evidence="6">
    <location>
        <position position="457"/>
    </location>
</feature>
<feature type="splice variant" id="VSP_003996" description="In isoform 2." evidence="7">
    <location>
        <begin position="1"/>
        <end position="247"/>
    </location>
</feature>
<feature type="splice variant" id="VSP_003997" description="In isoform 3." evidence="8">
    <location>
        <begin position="125"/>
        <end position="200"/>
    </location>
</feature>
<feature type="mutagenesis site" description="Specifically abolishes interaction with GRB2; mild decrease in phosphorylation." evidence="6">
    <original>Y</original>
    <variation>F</variation>
    <location>
        <position position="392"/>
    </location>
</feature>
<feature type="mutagenesis site" description="Specifically abolishes interaction with PIK3R1; mild decrease in phosphorylation." evidence="6">
    <original>YY</original>
    <variation>FF</variation>
    <location>
        <begin position="440"/>
        <end position="441"/>
    </location>
</feature>
<feature type="mutagenesis site" description="Abolishes phosphorylation by FYN and interaction with FYN." evidence="6">
    <original>Y</original>
    <variation>F</variation>
    <location>
        <position position="457"/>
    </location>
</feature>
<feature type="sequence conflict" description="In Ref. 2; BAB26526." evidence="9" ref="2">
    <original>A</original>
    <variation>V</variation>
    <location>
        <position position="414"/>
    </location>
</feature>
<comment type="function">
    <text evidence="6">Probable adapter protein involved in signaling pathways. Interacts with the SH2 and SH3 domains of various signaling proteins when it is phosphorylated. May promote FYN activation, possibly by disrupting intramolecular SH3-dependent interactions.</text>
</comment>
<comment type="subunit">
    <text evidence="1">Interacts with LYN (By similarity). Interacts with the SH2 and SH3 domains of FYN when phosphorylated. Also interacts with GRB2 and PIK3R1 when phosphorylated.</text>
</comment>
<comment type="subcellular location">
    <subcellularLocation>
        <location>Golgi apparatus</location>
        <location>Golgi stack</location>
    </subcellularLocation>
    <subcellularLocation>
        <location evidence="9">Endosome membrane</location>
    </subcellularLocation>
    <subcellularLocation>
        <location evidence="1">Cytoplasm</location>
    </subcellularLocation>
    <subcellularLocation>
        <location evidence="1">Membrane</location>
        <topology evidence="1">Peripheral membrane protein</topology>
        <orientation evidence="1">Cytoplasmic side</orientation>
    </subcellularLocation>
    <text evidence="1">A small proportion is membrane-associated.</text>
</comment>
<comment type="alternative products">
    <event type="alternative splicing"/>
    <isoform>
        <id>Q923U0-1</id>
        <name>1</name>
        <sequence type="displayed"/>
    </isoform>
    <isoform>
        <id>Q923U0-2</id>
        <name>2</name>
        <sequence type="described" ref="VSP_003996"/>
    </isoform>
    <isoform>
        <id>Q923U0-3</id>
        <name>3</name>
        <sequence type="described" ref="VSP_003997"/>
    </isoform>
</comment>
<comment type="tissue specificity">
    <text>Strongly expressed in brain and kidney, expressed at intermediate levels skin and heart, and weakly expressed in thymus. Not expressed in liver and spleen.</text>
</comment>
<comment type="PTM">
    <text evidence="1 6">Phosphorylated on tyrosines by LYN (By similarity). Phosphorylated on tyrosines by FYN.</text>
</comment>
<comment type="similarity">
    <text evidence="9">Belongs to the TOM1 family.</text>
</comment>
<organism>
    <name type="scientific">Mus musculus</name>
    <name type="common">Mouse</name>
    <dbReference type="NCBI Taxonomy" id="10090"/>
    <lineage>
        <taxon>Eukaryota</taxon>
        <taxon>Metazoa</taxon>
        <taxon>Chordata</taxon>
        <taxon>Craniata</taxon>
        <taxon>Vertebrata</taxon>
        <taxon>Euteleostomi</taxon>
        <taxon>Mammalia</taxon>
        <taxon>Eutheria</taxon>
        <taxon>Euarchontoglires</taxon>
        <taxon>Glires</taxon>
        <taxon>Rodentia</taxon>
        <taxon>Myomorpha</taxon>
        <taxon>Muroidea</taxon>
        <taxon>Muridae</taxon>
        <taxon>Murinae</taxon>
        <taxon>Mus</taxon>
        <taxon>Mus</taxon>
    </lineage>
</organism>
<proteinExistence type="evidence at protein level"/>
<protein>
    <recommendedName>
        <fullName>TOM1-like protein 1</fullName>
    </recommendedName>
    <alternativeName>
        <fullName>Src-activating and signaling molecule protein</fullName>
    </alternativeName>
    <alternativeName>
        <fullName>Target of Myb-like protein 1</fullName>
    </alternativeName>
</protein>
<gene>
    <name type="primary">Tom1l1</name>
    <name type="synonym">Srcasm</name>
</gene>
<sequence>MAFGKSHRDPYATSVGHLIEKATFAGVLTEDWGQFLHICDIINTTQDGPKDAVKALKKRISKNYNHKEIQLSLSLIDMCVQNCGPSFQSLIVKKEFIKDTLVKLLNPRYTLPLETQNRILNFIKTWSQGFPGGVDVSEVKEVYLDLLKKGVQFPPSDGEPETRQEAGQISPNRPTSVPTAPALSSIIAPKNPTISLVPEQIGKLHSELDMVKMNVKVMTAILMENTPGSENHEDIELLRKLYKTGREMQERIMDLLVVVENEDVTMELIQVNEDLNNAVLGYERFTRNQQRLLEQKRNRTEATRTSSEPSAPSCDLLDLSPIVPVPTPNEGALNSVNAQLSGLSVSSLSPVITNNLYPSLQPQRDLLASEDIEIPTLFPQRTSQNLASSHTYDNFHSNSVLLQPVSLHTATAAAAANQRLPPLPSSHPVLKDGDLQPPNYYEVMEFDPLAPTTEAVYEEIDGYHQKEAQSHSDC</sequence>
<evidence type="ECO:0000250" key="1"/>
<evidence type="ECO:0000250" key="2">
    <source>
        <dbReference type="UniProtKB" id="O75674"/>
    </source>
</evidence>
<evidence type="ECO:0000255" key="3">
    <source>
        <dbReference type="PROSITE-ProRule" id="PRU00218"/>
    </source>
</evidence>
<evidence type="ECO:0000255" key="4">
    <source>
        <dbReference type="PROSITE-ProRule" id="PRU00373"/>
    </source>
</evidence>
<evidence type="ECO:0000256" key="5">
    <source>
        <dbReference type="SAM" id="MobiDB-lite"/>
    </source>
</evidence>
<evidence type="ECO:0000269" key="6">
    <source>
    </source>
</evidence>
<evidence type="ECO:0000303" key="7">
    <source>
    </source>
</evidence>
<evidence type="ECO:0000303" key="8">
    <source>
    </source>
</evidence>
<evidence type="ECO:0000305" key="9"/>
<evidence type="ECO:0007744" key="10">
    <source>
    </source>
</evidence>
<name>TM1L1_MOUSE</name>
<accession>Q923U0</accession>
<accession>B0QZV4</accession>
<accession>Q5SRC7</accession>
<accession>Q5SRC9</accession>
<accession>Q99KE0</accession>
<accession>Q9D6Y5</accession>
<dbReference type="EMBL" id="AF395837">
    <property type="protein sequence ID" value="AAK83377.1"/>
    <property type="molecule type" value="mRNA"/>
</dbReference>
<dbReference type="EMBL" id="AK009826">
    <property type="protein sequence ID" value="BAB26526.1"/>
    <property type="molecule type" value="mRNA"/>
</dbReference>
<dbReference type="EMBL" id="AK083630">
    <property type="protein sequence ID" value="BAC38972.1"/>
    <property type="molecule type" value="mRNA"/>
</dbReference>
<dbReference type="EMBL" id="AL672199">
    <property type="status" value="NOT_ANNOTATED_CDS"/>
    <property type="molecule type" value="Genomic_DNA"/>
</dbReference>
<dbReference type="EMBL" id="BC004710">
    <property type="protein sequence ID" value="AAH04710.1"/>
    <property type="molecule type" value="mRNA"/>
</dbReference>
<dbReference type="CCDS" id="CCDS88219.1">
    <molecule id="Q923U0-2"/>
</dbReference>
<dbReference type="CCDS" id="CCDS88220.1">
    <molecule id="Q923U0-3"/>
</dbReference>
<dbReference type="CCDS" id="CCDS88221.1">
    <molecule id="Q923U0-1"/>
</dbReference>
<dbReference type="RefSeq" id="NP_001344472.1">
    <molecule id="Q923U0-1"/>
    <property type="nucleotide sequence ID" value="NM_001357543.1"/>
</dbReference>
<dbReference type="RefSeq" id="NP_001344473.1">
    <molecule id="Q923U0-3"/>
    <property type="nucleotide sequence ID" value="NM_001357544.1"/>
</dbReference>
<dbReference type="RefSeq" id="NP_001344476.1">
    <molecule id="Q923U0-2"/>
    <property type="nucleotide sequence ID" value="NM_001357547.1"/>
</dbReference>
<dbReference type="RefSeq" id="XP_006534331.1">
    <property type="nucleotide sequence ID" value="XM_006534268.3"/>
</dbReference>
<dbReference type="SMR" id="Q923U0"/>
<dbReference type="BioGRID" id="215046">
    <property type="interactions" value="3"/>
</dbReference>
<dbReference type="FunCoup" id="Q923U0">
    <property type="interactions" value="657"/>
</dbReference>
<dbReference type="STRING" id="10090.ENSMUSP00000103500"/>
<dbReference type="GlyGen" id="Q923U0">
    <property type="glycosylation" value="2 sites, 1 N-linked glycan (1 site), 1 O-linked glycan (1 site)"/>
</dbReference>
<dbReference type="iPTMnet" id="Q923U0"/>
<dbReference type="PhosphoSitePlus" id="Q923U0"/>
<dbReference type="PaxDb" id="10090-ENSMUSP00000103500"/>
<dbReference type="PeptideAtlas" id="Q923U0"/>
<dbReference type="ProteomicsDB" id="259544">
    <molecule id="Q923U0-1"/>
</dbReference>
<dbReference type="ProteomicsDB" id="259545">
    <molecule id="Q923U0-2"/>
</dbReference>
<dbReference type="ProteomicsDB" id="259546">
    <molecule id="Q923U0-3"/>
</dbReference>
<dbReference type="Pumba" id="Q923U0"/>
<dbReference type="Antibodypedia" id="18249">
    <property type="antibodies" value="247 antibodies from 33 providers"/>
</dbReference>
<dbReference type="Ensembl" id="ENSMUST00000020849.9">
    <molecule id="Q923U0-1"/>
    <property type="protein sequence ID" value="ENSMUSP00000020849.3"/>
    <property type="gene ID" value="ENSMUSG00000020541.13"/>
</dbReference>
<dbReference type="Ensembl" id="ENSMUST00000107867.8">
    <molecule id="Q923U0-2"/>
    <property type="protein sequence ID" value="ENSMUSP00000103499.2"/>
    <property type="gene ID" value="ENSMUSG00000020541.13"/>
</dbReference>
<dbReference type="Ensembl" id="ENSMUST00000107869.9">
    <molecule id="Q923U0-3"/>
    <property type="protein sequence ID" value="ENSMUSP00000103501.3"/>
    <property type="gene ID" value="ENSMUSG00000020541.13"/>
</dbReference>
<dbReference type="GeneID" id="71943"/>
<dbReference type="UCSC" id="uc007kxa.1">
    <molecule id="Q923U0-2"/>
    <property type="organism name" value="mouse"/>
</dbReference>
<dbReference type="UCSC" id="uc007kxb.1">
    <molecule id="Q923U0-1"/>
    <property type="organism name" value="mouse"/>
</dbReference>
<dbReference type="UCSC" id="uc011ycr.1">
    <molecule id="Q923U0-3"/>
    <property type="organism name" value="mouse"/>
</dbReference>
<dbReference type="AGR" id="MGI:1919193"/>
<dbReference type="MGI" id="MGI:1919193">
    <property type="gene designation" value="Tom1l1"/>
</dbReference>
<dbReference type="VEuPathDB" id="HostDB:ENSMUSG00000020541"/>
<dbReference type="eggNOG" id="KOG1087">
    <property type="taxonomic scope" value="Eukaryota"/>
</dbReference>
<dbReference type="GeneTree" id="ENSGT00940000160240"/>
<dbReference type="HOGENOM" id="CLU_1219375_0_0_1"/>
<dbReference type="InParanoid" id="Q923U0"/>
<dbReference type="OMA" id="FMHICDL"/>
<dbReference type="OrthoDB" id="2018246at2759"/>
<dbReference type="PhylomeDB" id="Q923U0"/>
<dbReference type="BioGRID-ORCS" id="71943">
    <property type="hits" value="2 hits in 62 CRISPR screens"/>
</dbReference>
<dbReference type="ChiTaRS" id="Tom1l1">
    <property type="organism name" value="mouse"/>
</dbReference>
<dbReference type="PRO" id="PR:Q923U0"/>
<dbReference type="Proteomes" id="UP000000589">
    <property type="component" value="Chromosome 11"/>
</dbReference>
<dbReference type="RNAct" id="Q923U0">
    <property type="molecule type" value="protein"/>
</dbReference>
<dbReference type="Bgee" id="ENSMUSG00000020541">
    <property type="expression patterns" value="Expressed in seminal vesicle and 234 other cell types or tissues"/>
</dbReference>
<dbReference type="ExpressionAtlas" id="Q923U0">
    <property type="expression patterns" value="baseline and differential"/>
</dbReference>
<dbReference type="GO" id="GO:0005829">
    <property type="term" value="C:cytosol"/>
    <property type="evidence" value="ECO:0007669"/>
    <property type="project" value="Ensembl"/>
</dbReference>
<dbReference type="GO" id="GO:0010008">
    <property type="term" value="C:endosome membrane"/>
    <property type="evidence" value="ECO:0007669"/>
    <property type="project" value="UniProtKB-SubCell"/>
</dbReference>
<dbReference type="GO" id="GO:0005795">
    <property type="term" value="C:Golgi stack"/>
    <property type="evidence" value="ECO:0007669"/>
    <property type="project" value="UniProtKB-SubCell"/>
</dbReference>
<dbReference type="GO" id="GO:0030276">
    <property type="term" value="F:clathrin binding"/>
    <property type="evidence" value="ECO:0007669"/>
    <property type="project" value="Ensembl"/>
</dbReference>
<dbReference type="GO" id="GO:0035091">
    <property type="term" value="F:phosphatidylinositol binding"/>
    <property type="evidence" value="ECO:0007669"/>
    <property type="project" value="InterPro"/>
</dbReference>
<dbReference type="GO" id="GO:0030295">
    <property type="term" value="F:protein kinase activator activity"/>
    <property type="evidence" value="ECO:0000314"/>
    <property type="project" value="MGI"/>
</dbReference>
<dbReference type="GO" id="GO:0019901">
    <property type="term" value="F:protein kinase binding"/>
    <property type="evidence" value="ECO:0007669"/>
    <property type="project" value="Ensembl"/>
</dbReference>
<dbReference type="GO" id="GO:0017124">
    <property type="term" value="F:SH3 domain binding"/>
    <property type="evidence" value="ECO:0007669"/>
    <property type="project" value="UniProtKB-KW"/>
</dbReference>
<dbReference type="GO" id="GO:0043130">
    <property type="term" value="F:ubiquitin binding"/>
    <property type="evidence" value="ECO:0007669"/>
    <property type="project" value="InterPro"/>
</dbReference>
<dbReference type="GO" id="GO:0007169">
    <property type="term" value="P:cell surface receptor protein tyrosine kinase signaling pathway"/>
    <property type="evidence" value="ECO:0000304"/>
    <property type="project" value="MGI"/>
</dbReference>
<dbReference type="GO" id="GO:0045839">
    <property type="term" value="P:negative regulation of mitotic nuclear division"/>
    <property type="evidence" value="ECO:0007669"/>
    <property type="project" value="Ensembl"/>
</dbReference>
<dbReference type="GO" id="GO:0015031">
    <property type="term" value="P:protein transport"/>
    <property type="evidence" value="ECO:0007669"/>
    <property type="project" value="UniProtKB-KW"/>
</dbReference>
<dbReference type="CDD" id="cd14237">
    <property type="entry name" value="GAT_TM1L1"/>
    <property type="match status" value="1"/>
</dbReference>
<dbReference type="CDD" id="cd16997">
    <property type="entry name" value="VHS_Tom1L1"/>
    <property type="match status" value="1"/>
</dbReference>
<dbReference type="FunFam" id="1.25.40.90:FF:000003">
    <property type="entry name" value="TOM1-like protein 2 isoform X1"/>
    <property type="match status" value="1"/>
</dbReference>
<dbReference type="Gene3D" id="1.20.58.160">
    <property type="match status" value="1"/>
</dbReference>
<dbReference type="Gene3D" id="1.25.40.90">
    <property type="match status" value="1"/>
</dbReference>
<dbReference type="InterPro" id="IPR008942">
    <property type="entry name" value="ENTH_VHS"/>
</dbReference>
<dbReference type="InterPro" id="IPR004152">
    <property type="entry name" value="GAT_dom"/>
</dbReference>
<dbReference type="InterPro" id="IPR038425">
    <property type="entry name" value="GAT_sf"/>
</dbReference>
<dbReference type="InterPro" id="IPR014645">
    <property type="entry name" value="TOM1"/>
</dbReference>
<dbReference type="InterPro" id="IPR027428">
    <property type="entry name" value="TOM1L1_GAT_dom"/>
</dbReference>
<dbReference type="InterPro" id="IPR047013">
    <property type="entry name" value="TOM1L1_VHS_dom"/>
</dbReference>
<dbReference type="InterPro" id="IPR002014">
    <property type="entry name" value="VHS_dom"/>
</dbReference>
<dbReference type="PANTHER" id="PTHR13856:SF28">
    <property type="entry name" value="TOM1-LIKE PROTEIN 1"/>
    <property type="match status" value="1"/>
</dbReference>
<dbReference type="PANTHER" id="PTHR13856">
    <property type="entry name" value="VHS DOMAIN CONTAINING PROTEIN FAMILY"/>
    <property type="match status" value="1"/>
</dbReference>
<dbReference type="Pfam" id="PF03127">
    <property type="entry name" value="GAT"/>
    <property type="match status" value="1"/>
</dbReference>
<dbReference type="Pfam" id="PF00790">
    <property type="entry name" value="VHS"/>
    <property type="match status" value="1"/>
</dbReference>
<dbReference type="PIRSF" id="PIRSF036948">
    <property type="entry name" value="TOM1"/>
    <property type="match status" value="1"/>
</dbReference>
<dbReference type="SMART" id="SM00288">
    <property type="entry name" value="VHS"/>
    <property type="match status" value="1"/>
</dbReference>
<dbReference type="SUPFAM" id="SSF48464">
    <property type="entry name" value="ENTH/VHS domain"/>
    <property type="match status" value="1"/>
</dbReference>
<dbReference type="SUPFAM" id="SSF89009">
    <property type="entry name" value="GAT-like domain"/>
    <property type="match status" value="1"/>
</dbReference>
<dbReference type="PROSITE" id="PS50909">
    <property type="entry name" value="GAT"/>
    <property type="match status" value="1"/>
</dbReference>
<dbReference type="PROSITE" id="PS50179">
    <property type="entry name" value="VHS"/>
    <property type="match status" value="1"/>
</dbReference>
<reference key="1">
    <citation type="journal article" date="2002" name="J. Biol. Chem.">
        <title>'Srcasm: a novel Src activating and signaling molecule.</title>
        <authorList>
            <person name="Seykora J.T."/>
            <person name="Mei L."/>
            <person name="Dotto G.P."/>
            <person name="Stein P.L."/>
        </authorList>
    </citation>
    <scope>NUCLEOTIDE SEQUENCE [MRNA] (ISOFORM 1)</scope>
    <scope>FUNCTION</scope>
    <scope>PHOSPHORYLATION AT TYR-457</scope>
    <scope>MUTAGENESIS OF TYR-392; 440-TYR-TYR-441 AND TYR-457</scope>
    <source>
        <strain>C57BL/6J</strain>
        <tissue>Keratinocyte</tissue>
    </source>
</reference>
<reference key="2">
    <citation type="journal article" date="2005" name="Science">
        <title>The transcriptional landscape of the mammalian genome.</title>
        <authorList>
            <person name="Carninci P."/>
            <person name="Kasukawa T."/>
            <person name="Katayama S."/>
            <person name="Gough J."/>
            <person name="Frith M.C."/>
            <person name="Maeda N."/>
            <person name="Oyama R."/>
            <person name="Ravasi T."/>
            <person name="Lenhard B."/>
            <person name="Wells C."/>
            <person name="Kodzius R."/>
            <person name="Shimokawa K."/>
            <person name="Bajic V.B."/>
            <person name="Brenner S.E."/>
            <person name="Batalov S."/>
            <person name="Forrest A.R."/>
            <person name="Zavolan M."/>
            <person name="Davis M.J."/>
            <person name="Wilming L.G."/>
            <person name="Aidinis V."/>
            <person name="Allen J.E."/>
            <person name="Ambesi-Impiombato A."/>
            <person name="Apweiler R."/>
            <person name="Aturaliya R.N."/>
            <person name="Bailey T.L."/>
            <person name="Bansal M."/>
            <person name="Baxter L."/>
            <person name="Beisel K.W."/>
            <person name="Bersano T."/>
            <person name="Bono H."/>
            <person name="Chalk A.M."/>
            <person name="Chiu K.P."/>
            <person name="Choudhary V."/>
            <person name="Christoffels A."/>
            <person name="Clutterbuck D.R."/>
            <person name="Crowe M.L."/>
            <person name="Dalla E."/>
            <person name="Dalrymple B.P."/>
            <person name="de Bono B."/>
            <person name="Della Gatta G."/>
            <person name="di Bernardo D."/>
            <person name="Down T."/>
            <person name="Engstrom P."/>
            <person name="Fagiolini M."/>
            <person name="Faulkner G."/>
            <person name="Fletcher C.F."/>
            <person name="Fukushima T."/>
            <person name="Furuno M."/>
            <person name="Futaki S."/>
            <person name="Gariboldi M."/>
            <person name="Georgii-Hemming P."/>
            <person name="Gingeras T.R."/>
            <person name="Gojobori T."/>
            <person name="Green R.E."/>
            <person name="Gustincich S."/>
            <person name="Harbers M."/>
            <person name="Hayashi Y."/>
            <person name="Hensch T.K."/>
            <person name="Hirokawa N."/>
            <person name="Hill D."/>
            <person name="Huminiecki L."/>
            <person name="Iacono M."/>
            <person name="Ikeo K."/>
            <person name="Iwama A."/>
            <person name="Ishikawa T."/>
            <person name="Jakt M."/>
            <person name="Kanapin A."/>
            <person name="Katoh M."/>
            <person name="Kawasawa Y."/>
            <person name="Kelso J."/>
            <person name="Kitamura H."/>
            <person name="Kitano H."/>
            <person name="Kollias G."/>
            <person name="Krishnan S.P."/>
            <person name="Kruger A."/>
            <person name="Kummerfeld S.K."/>
            <person name="Kurochkin I.V."/>
            <person name="Lareau L.F."/>
            <person name="Lazarevic D."/>
            <person name="Lipovich L."/>
            <person name="Liu J."/>
            <person name="Liuni S."/>
            <person name="McWilliam S."/>
            <person name="Madan Babu M."/>
            <person name="Madera M."/>
            <person name="Marchionni L."/>
            <person name="Matsuda H."/>
            <person name="Matsuzawa S."/>
            <person name="Miki H."/>
            <person name="Mignone F."/>
            <person name="Miyake S."/>
            <person name="Morris K."/>
            <person name="Mottagui-Tabar S."/>
            <person name="Mulder N."/>
            <person name="Nakano N."/>
            <person name="Nakauchi H."/>
            <person name="Ng P."/>
            <person name="Nilsson R."/>
            <person name="Nishiguchi S."/>
            <person name="Nishikawa S."/>
            <person name="Nori F."/>
            <person name="Ohara O."/>
            <person name="Okazaki Y."/>
            <person name="Orlando V."/>
            <person name="Pang K.C."/>
            <person name="Pavan W.J."/>
            <person name="Pavesi G."/>
            <person name="Pesole G."/>
            <person name="Petrovsky N."/>
            <person name="Piazza S."/>
            <person name="Reed J."/>
            <person name="Reid J.F."/>
            <person name="Ring B.Z."/>
            <person name="Ringwald M."/>
            <person name="Rost B."/>
            <person name="Ruan Y."/>
            <person name="Salzberg S.L."/>
            <person name="Sandelin A."/>
            <person name="Schneider C."/>
            <person name="Schoenbach C."/>
            <person name="Sekiguchi K."/>
            <person name="Semple C.A."/>
            <person name="Seno S."/>
            <person name="Sessa L."/>
            <person name="Sheng Y."/>
            <person name="Shibata Y."/>
            <person name="Shimada H."/>
            <person name="Shimada K."/>
            <person name="Silva D."/>
            <person name="Sinclair B."/>
            <person name="Sperling S."/>
            <person name="Stupka E."/>
            <person name="Sugiura K."/>
            <person name="Sultana R."/>
            <person name="Takenaka Y."/>
            <person name="Taki K."/>
            <person name="Tammoja K."/>
            <person name="Tan S.L."/>
            <person name="Tang S."/>
            <person name="Taylor M.S."/>
            <person name="Tegner J."/>
            <person name="Teichmann S.A."/>
            <person name="Ueda H.R."/>
            <person name="van Nimwegen E."/>
            <person name="Verardo R."/>
            <person name="Wei C.L."/>
            <person name="Yagi K."/>
            <person name="Yamanishi H."/>
            <person name="Zabarovsky E."/>
            <person name="Zhu S."/>
            <person name="Zimmer A."/>
            <person name="Hide W."/>
            <person name="Bult C."/>
            <person name="Grimmond S.M."/>
            <person name="Teasdale R.D."/>
            <person name="Liu E.T."/>
            <person name="Brusic V."/>
            <person name="Quackenbush J."/>
            <person name="Wahlestedt C."/>
            <person name="Mattick J.S."/>
            <person name="Hume D.A."/>
            <person name="Kai C."/>
            <person name="Sasaki D."/>
            <person name="Tomaru Y."/>
            <person name="Fukuda S."/>
            <person name="Kanamori-Katayama M."/>
            <person name="Suzuki M."/>
            <person name="Aoki J."/>
            <person name="Arakawa T."/>
            <person name="Iida J."/>
            <person name="Imamura K."/>
            <person name="Itoh M."/>
            <person name="Kato T."/>
            <person name="Kawaji H."/>
            <person name="Kawagashira N."/>
            <person name="Kawashima T."/>
            <person name="Kojima M."/>
            <person name="Kondo S."/>
            <person name="Konno H."/>
            <person name="Nakano K."/>
            <person name="Ninomiya N."/>
            <person name="Nishio T."/>
            <person name="Okada M."/>
            <person name="Plessy C."/>
            <person name="Shibata K."/>
            <person name="Shiraki T."/>
            <person name="Suzuki S."/>
            <person name="Tagami M."/>
            <person name="Waki K."/>
            <person name="Watahiki A."/>
            <person name="Okamura-Oho Y."/>
            <person name="Suzuki H."/>
            <person name="Kawai J."/>
            <person name="Hayashizaki Y."/>
        </authorList>
    </citation>
    <scope>NUCLEOTIDE SEQUENCE [LARGE SCALE MRNA] (ISOFORMS 1 AND 3)</scope>
    <source>
        <strain>C57BL/6J</strain>
        <tissue>Tongue</tissue>
    </source>
</reference>
<reference key="3">
    <citation type="journal article" date="2009" name="PLoS Biol.">
        <title>Lineage-specific biology revealed by a finished genome assembly of the mouse.</title>
        <authorList>
            <person name="Church D.M."/>
            <person name="Goodstadt L."/>
            <person name="Hillier L.W."/>
            <person name="Zody M.C."/>
            <person name="Goldstein S."/>
            <person name="She X."/>
            <person name="Bult C.J."/>
            <person name="Agarwala R."/>
            <person name="Cherry J.L."/>
            <person name="DiCuccio M."/>
            <person name="Hlavina W."/>
            <person name="Kapustin Y."/>
            <person name="Meric P."/>
            <person name="Maglott D."/>
            <person name="Birtle Z."/>
            <person name="Marques A.C."/>
            <person name="Graves T."/>
            <person name="Zhou S."/>
            <person name="Teague B."/>
            <person name="Potamousis K."/>
            <person name="Churas C."/>
            <person name="Place M."/>
            <person name="Herschleb J."/>
            <person name="Runnheim R."/>
            <person name="Forrest D."/>
            <person name="Amos-Landgraf J."/>
            <person name="Schwartz D.C."/>
            <person name="Cheng Z."/>
            <person name="Lindblad-Toh K."/>
            <person name="Eichler E.E."/>
            <person name="Ponting C.P."/>
        </authorList>
    </citation>
    <scope>NUCLEOTIDE SEQUENCE [LARGE SCALE GENOMIC DNA]</scope>
    <source>
        <strain>C57BL/6J</strain>
    </source>
</reference>
<reference key="4">
    <citation type="journal article" date="2004" name="Genome Res.">
        <title>The status, quality, and expansion of the NIH full-length cDNA project: the Mammalian Gene Collection (MGC).</title>
        <authorList>
            <consortium name="The MGC Project Team"/>
        </authorList>
    </citation>
    <scope>NUCLEOTIDE SEQUENCE [LARGE SCALE MRNA] (ISOFORM 2)</scope>
    <source>
        <tissue>Carcinoma</tissue>
    </source>
</reference>
<reference key="5">
    <citation type="journal article" date="2010" name="Cell">
        <title>A tissue-specific atlas of mouse protein phosphorylation and expression.</title>
        <authorList>
            <person name="Huttlin E.L."/>
            <person name="Jedrychowski M.P."/>
            <person name="Elias J.E."/>
            <person name="Goswami T."/>
            <person name="Rad R."/>
            <person name="Beausoleil S.A."/>
            <person name="Villen J."/>
            <person name="Haas W."/>
            <person name="Sowa M.E."/>
            <person name="Gygi S.P."/>
        </authorList>
    </citation>
    <scope>PHOSPHORYLATION [LARGE SCALE ANALYSIS] AT SER-170</scope>
    <scope>IDENTIFICATION BY MASS SPECTROMETRY [LARGE SCALE ANALYSIS]</scope>
    <source>
        <tissue>Lung</tissue>
        <tissue>Spleen</tissue>
    </source>
</reference>
<keyword id="KW-0025">Alternative splicing</keyword>
<keyword id="KW-0963">Cytoplasm</keyword>
<keyword id="KW-0967">Endosome</keyword>
<keyword id="KW-0333">Golgi apparatus</keyword>
<keyword id="KW-0472">Membrane</keyword>
<keyword id="KW-0597">Phosphoprotein</keyword>
<keyword id="KW-0653">Protein transport</keyword>
<keyword id="KW-1185">Reference proteome</keyword>
<keyword id="KW-0729">SH3-binding</keyword>
<keyword id="KW-0813">Transport</keyword>